<name>RNPH_FRAP2</name>
<accession>B0U040</accession>
<sequence>MRPSGRNNDQLRTLKVTHNFTKHAEGSVLIEFGDTKVLCTASVVAGVPRFKKDSGEGWLTAEYGMLPRSTHTRMDREAARGKQSGRTQEIQRLIGRALRASVDLTKIGENTIKVDCDVIQADGGTRTASITGASLAIRDAIDYMKQNGMLDEQTSPLMSQVAAISVGIFNNEPVLDLDYDEDSNAETDMNVVMNSNGGMIEIQGTAEGKDFSEEEFAKMLGLAKKGIKEIFESIF</sequence>
<organism>
    <name type="scientific">Francisella philomiragia subsp. philomiragia (strain ATCC 25017 / CCUG 19701 / FSC 153 / O#319-036)</name>
    <dbReference type="NCBI Taxonomy" id="484022"/>
    <lineage>
        <taxon>Bacteria</taxon>
        <taxon>Pseudomonadati</taxon>
        <taxon>Pseudomonadota</taxon>
        <taxon>Gammaproteobacteria</taxon>
        <taxon>Thiotrichales</taxon>
        <taxon>Francisellaceae</taxon>
        <taxon>Francisella</taxon>
    </lineage>
</organism>
<gene>
    <name evidence="1" type="primary">rph</name>
    <name type="ordered locus">Fphi_0451</name>
</gene>
<comment type="function">
    <text evidence="1">Phosphorolytic 3'-5' exoribonuclease that plays an important role in tRNA 3'-end maturation. Removes nucleotide residues following the 3'-CCA terminus of tRNAs; can also add nucleotides to the ends of RNA molecules by using nucleoside diphosphates as substrates, but this may not be physiologically important. Probably plays a role in initiation of 16S rRNA degradation (leading to ribosome degradation) during starvation.</text>
</comment>
<comment type="catalytic activity">
    <reaction evidence="1">
        <text>tRNA(n+1) + phosphate = tRNA(n) + a ribonucleoside 5'-diphosphate</text>
        <dbReference type="Rhea" id="RHEA:10628"/>
        <dbReference type="Rhea" id="RHEA-COMP:17343"/>
        <dbReference type="Rhea" id="RHEA-COMP:17344"/>
        <dbReference type="ChEBI" id="CHEBI:43474"/>
        <dbReference type="ChEBI" id="CHEBI:57930"/>
        <dbReference type="ChEBI" id="CHEBI:173114"/>
        <dbReference type="EC" id="2.7.7.56"/>
    </reaction>
</comment>
<comment type="subunit">
    <text evidence="1">Homohexameric ring arranged as a trimer of dimers.</text>
</comment>
<comment type="similarity">
    <text evidence="1">Belongs to the RNase PH family.</text>
</comment>
<proteinExistence type="inferred from homology"/>
<evidence type="ECO:0000255" key="1">
    <source>
        <dbReference type="HAMAP-Rule" id="MF_00564"/>
    </source>
</evidence>
<keyword id="KW-0548">Nucleotidyltransferase</keyword>
<keyword id="KW-0694">RNA-binding</keyword>
<keyword id="KW-0698">rRNA processing</keyword>
<keyword id="KW-0808">Transferase</keyword>
<keyword id="KW-0819">tRNA processing</keyword>
<keyword id="KW-0820">tRNA-binding</keyword>
<reference key="1">
    <citation type="submission" date="2007-12" db="EMBL/GenBank/DDBJ databases">
        <title>Complete sequence of chromosome of Francisella philomiragia subsp. philomiragia ATCC 25017.</title>
        <authorList>
            <consortium name="US DOE Joint Genome Institute"/>
            <person name="Copeland A."/>
            <person name="Lucas S."/>
            <person name="Lapidus A."/>
            <person name="Barry K."/>
            <person name="Detter J.C."/>
            <person name="Glavina del Rio T."/>
            <person name="Hammon N."/>
            <person name="Israni S."/>
            <person name="Dalin E."/>
            <person name="Tice H."/>
            <person name="Pitluck S."/>
            <person name="Chain P."/>
            <person name="Malfatti S."/>
            <person name="Shin M."/>
            <person name="Vergez L."/>
            <person name="Schmutz J."/>
            <person name="Larimer F."/>
            <person name="Land M."/>
            <person name="Hauser L."/>
            <person name="Richardson P."/>
        </authorList>
    </citation>
    <scope>NUCLEOTIDE SEQUENCE [LARGE SCALE GENOMIC DNA]</scope>
    <source>
        <strain>ATCC 25017 / CCUG 19701 / FSC 153 / O#319-036</strain>
    </source>
</reference>
<dbReference type="EC" id="2.7.7.56" evidence="1"/>
<dbReference type="EMBL" id="CP000937">
    <property type="protein sequence ID" value="ABZ86669.1"/>
    <property type="molecule type" value="Genomic_DNA"/>
</dbReference>
<dbReference type="SMR" id="B0U040"/>
<dbReference type="KEGG" id="fph:Fphi_0451"/>
<dbReference type="eggNOG" id="COG0689">
    <property type="taxonomic scope" value="Bacteria"/>
</dbReference>
<dbReference type="HOGENOM" id="CLU_050858_0_0_6"/>
<dbReference type="GO" id="GO:0000175">
    <property type="term" value="F:3'-5'-RNA exonuclease activity"/>
    <property type="evidence" value="ECO:0007669"/>
    <property type="project" value="UniProtKB-UniRule"/>
</dbReference>
<dbReference type="GO" id="GO:0000049">
    <property type="term" value="F:tRNA binding"/>
    <property type="evidence" value="ECO:0007669"/>
    <property type="project" value="UniProtKB-UniRule"/>
</dbReference>
<dbReference type="GO" id="GO:0009022">
    <property type="term" value="F:tRNA nucleotidyltransferase activity"/>
    <property type="evidence" value="ECO:0007669"/>
    <property type="project" value="UniProtKB-UniRule"/>
</dbReference>
<dbReference type="GO" id="GO:0016075">
    <property type="term" value="P:rRNA catabolic process"/>
    <property type="evidence" value="ECO:0007669"/>
    <property type="project" value="UniProtKB-UniRule"/>
</dbReference>
<dbReference type="GO" id="GO:0006364">
    <property type="term" value="P:rRNA processing"/>
    <property type="evidence" value="ECO:0007669"/>
    <property type="project" value="UniProtKB-KW"/>
</dbReference>
<dbReference type="GO" id="GO:0008033">
    <property type="term" value="P:tRNA processing"/>
    <property type="evidence" value="ECO:0007669"/>
    <property type="project" value="UniProtKB-UniRule"/>
</dbReference>
<dbReference type="CDD" id="cd11362">
    <property type="entry name" value="RNase_PH_bact"/>
    <property type="match status" value="1"/>
</dbReference>
<dbReference type="FunFam" id="3.30.230.70:FF:000003">
    <property type="entry name" value="Ribonuclease PH"/>
    <property type="match status" value="1"/>
</dbReference>
<dbReference type="Gene3D" id="3.30.230.70">
    <property type="entry name" value="GHMP Kinase, N-terminal domain"/>
    <property type="match status" value="1"/>
</dbReference>
<dbReference type="HAMAP" id="MF_00564">
    <property type="entry name" value="RNase_PH"/>
    <property type="match status" value="1"/>
</dbReference>
<dbReference type="InterPro" id="IPR001247">
    <property type="entry name" value="ExoRNase_PH_dom1"/>
</dbReference>
<dbReference type="InterPro" id="IPR015847">
    <property type="entry name" value="ExoRNase_PH_dom2"/>
</dbReference>
<dbReference type="InterPro" id="IPR036345">
    <property type="entry name" value="ExoRNase_PH_dom2_sf"/>
</dbReference>
<dbReference type="InterPro" id="IPR027408">
    <property type="entry name" value="PNPase/RNase_PH_dom_sf"/>
</dbReference>
<dbReference type="InterPro" id="IPR020568">
    <property type="entry name" value="Ribosomal_Su5_D2-typ_SF"/>
</dbReference>
<dbReference type="InterPro" id="IPR050080">
    <property type="entry name" value="RNase_PH"/>
</dbReference>
<dbReference type="InterPro" id="IPR002381">
    <property type="entry name" value="RNase_PH_bac-type"/>
</dbReference>
<dbReference type="InterPro" id="IPR018336">
    <property type="entry name" value="RNase_PH_CS"/>
</dbReference>
<dbReference type="NCBIfam" id="TIGR01966">
    <property type="entry name" value="RNasePH"/>
    <property type="match status" value="1"/>
</dbReference>
<dbReference type="PANTHER" id="PTHR11953">
    <property type="entry name" value="EXOSOME COMPLEX COMPONENT"/>
    <property type="match status" value="1"/>
</dbReference>
<dbReference type="PANTHER" id="PTHR11953:SF0">
    <property type="entry name" value="EXOSOME COMPLEX COMPONENT RRP41"/>
    <property type="match status" value="1"/>
</dbReference>
<dbReference type="Pfam" id="PF01138">
    <property type="entry name" value="RNase_PH"/>
    <property type="match status" value="1"/>
</dbReference>
<dbReference type="Pfam" id="PF03725">
    <property type="entry name" value="RNase_PH_C"/>
    <property type="match status" value="1"/>
</dbReference>
<dbReference type="SUPFAM" id="SSF55666">
    <property type="entry name" value="Ribonuclease PH domain 2-like"/>
    <property type="match status" value="1"/>
</dbReference>
<dbReference type="SUPFAM" id="SSF54211">
    <property type="entry name" value="Ribosomal protein S5 domain 2-like"/>
    <property type="match status" value="1"/>
</dbReference>
<dbReference type="PROSITE" id="PS01277">
    <property type="entry name" value="RIBONUCLEASE_PH"/>
    <property type="match status" value="1"/>
</dbReference>
<feature type="chain" id="PRO_1000082292" description="Ribonuclease PH">
    <location>
        <begin position="1"/>
        <end position="235"/>
    </location>
</feature>
<feature type="binding site" evidence="1">
    <location>
        <position position="86"/>
    </location>
    <ligand>
        <name>phosphate</name>
        <dbReference type="ChEBI" id="CHEBI:43474"/>
        <note>substrate</note>
    </ligand>
</feature>
<feature type="binding site" evidence="1">
    <location>
        <begin position="124"/>
        <end position="126"/>
    </location>
    <ligand>
        <name>phosphate</name>
        <dbReference type="ChEBI" id="CHEBI:43474"/>
        <note>substrate</note>
    </ligand>
</feature>
<protein>
    <recommendedName>
        <fullName evidence="1">Ribonuclease PH</fullName>
        <shortName evidence="1">RNase PH</shortName>
        <ecNumber evidence="1">2.7.7.56</ecNumber>
    </recommendedName>
    <alternativeName>
        <fullName evidence="1">tRNA nucleotidyltransferase</fullName>
    </alternativeName>
</protein>